<proteinExistence type="evidence at protein level"/>
<reference key="1">
    <citation type="journal article" date="1997" name="Science">
        <title>The complete genome sequence of Escherichia coli K-12.</title>
        <authorList>
            <person name="Blattner F.R."/>
            <person name="Plunkett G. III"/>
            <person name="Bloch C.A."/>
            <person name="Perna N.T."/>
            <person name="Burland V."/>
            <person name="Riley M."/>
            <person name="Collado-Vides J."/>
            <person name="Glasner J.D."/>
            <person name="Rode C.K."/>
            <person name="Mayhew G.F."/>
            <person name="Gregor J."/>
            <person name="Davis N.W."/>
            <person name="Kirkpatrick H.A."/>
            <person name="Goeden M.A."/>
            <person name="Rose D.J."/>
            <person name="Mau B."/>
            <person name="Shao Y."/>
        </authorList>
    </citation>
    <scope>NUCLEOTIDE SEQUENCE [LARGE SCALE GENOMIC DNA]</scope>
    <source>
        <strain>K12 / MG1655 / ATCC 47076</strain>
    </source>
</reference>
<reference key="2">
    <citation type="journal article" date="2006" name="Mol. Syst. Biol.">
        <title>Highly accurate genome sequences of Escherichia coli K-12 strains MG1655 and W3110.</title>
        <authorList>
            <person name="Hayashi K."/>
            <person name="Morooka N."/>
            <person name="Yamamoto Y."/>
            <person name="Fujita K."/>
            <person name="Isono K."/>
            <person name="Choi S."/>
            <person name="Ohtsubo E."/>
            <person name="Baba T."/>
            <person name="Wanner B.L."/>
            <person name="Mori H."/>
            <person name="Horiuchi T."/>
        </authorList>
    </citation>
    <scope>NUCLEOTIDE SEQUENCE [LARGE SCALE GENOMIC DNA]</scope>
    <source>
        <strain>K12 / W3110 / ATCC 27325 / DSM 5911</strain>
    </source>
</reference>
<reference key="3">
    <citation type="journal article" date="2008" name="J. Biol. Chem.">
        <title>Escherichia coli YqhD exhibits aldehyde reductase activity and protects from the harmful effect of lipid peroxidation-derived aldehydes.</title>
        <authorList>
            <person name="Perez J.M."/>
            <person name="Arenas F.A."/>
            <person name="Pradenas G.A."/>
            <person name="Sandoval J.M."/>
            <person name="Vasquez C.C."/>
        </authorList>
    </citation>
    <scope>FUNCTION</scope>
    <scope>CATALYTIC ACTIVITY</scope>
    <scope>BIOPHYSICOCHEMICAL PROPERTIES</scope>
    <scope>INDUCTION</scope>
    <scope>DISRUPTION PHENOTYPE</scope>
    <source>
        <strain>K12 / BW25113</strain>
    </source>
</reference>
<reference key="4">
    <citation type="journal article" date="2009" name="Appl. Environ. Microbiol.">
        <title>Silencing of NADPH-dependent oxidoreductase genes (yqhD and dkgA) in furfural-resistant ethanologenic Escherichia coli.</title>
        <authorList>
            <person name="Miller E.N."/>
            <person name="Jarboe L.R."/>
            <person name="Yomano L.P."/>
            <person name="York S.W."/>
            <person name="Shanmugam K.T."/>
            <person name="Ingram L.O."/>
        </authorList>
    </citation>
    <scope>FUNCTION</scope>
    <scope>CATALYTIC ACTIVITY</scope>
    <scope>BIOPHYSICOCHEMICAL PROPERTIES</scope>
    <source>
        <strain>KO11 / LY180</strain>
    </source>
</reference>
<reference key="5">
    <citation type="journal article" date="2010" name="Appl. Microbiol. Biotechnol.">
        <title>Engineering the isobutanol biosynthetic pathway in Escherichia coli by comparison of three aldehyde reductase/alcohol dehydrogenase genes.</title>
        <authorList>
            <person name="Atsumi S."/>
            <person name="Wu T.Y."/>
            <person name="Eckl E.M."/>
            <person name="Hawkins S.D."/>
            <person name="Buelter T."/>
            <person name="Liao J.C."/>
        </authorList>
    </citation>
    <scope>FUNCTION</scope>
    <scope>CATALYTIC ACTIVITY</scope>
    <scope>BIOPHYSICOCHEMICAL PROPERTIES</scope>
    <scope>DISRUPTION PHENOTYPE</scope>
    <source>
        <strain>K12 / MG1655 / ATCC 47076</strain>
    </source>
</reference>
<reference key="6">
    <citation type="journal article" date="2010" name="J. Bacteriol.">
        <title>Transcriptional activation of the aldehyde reductase YqhD by YqhC and its implication in glyoxal metabolism of Escherichia coli K-12.</title>
        <authorList>
            <person name="Lee C."/>
            <person name="Kim I."/>
            <person name="Lee J."/>
            <person name="Lee K.L."/>
            <person name="Min B."/>
            <person name="Park C."/>
        </authorList>
    </citation>
    <scope>FUNCTION</scope>
    <scope>CATALYTIC ACTIVITY</scope>
    <scope>BIOPHYSICOCHEMICAL PROPERTIES</scope>
    <scope>INDUCTION</scope>
    <scope>DISRUPTION PHENOTYPE</scope>
    <source>
        <strain>K12 / MG1655 / ATCC 47076</strain>
    </source>
</reference>
<reference key="7">
    <citation type="journal article" date="2011" name="Appl. Microbiol. Biotechnol.">
        <title>YqhD: a broad-substrate range aldehyde reductase with various applications in production of biorenewable fuels and chemicals.</title>
        <authorList>
            <person name="Jarboe L.R."/>
        </authorList>
    </citation>
    <scope>BIOTECHNOLOGY</scope>
    <scope>REVIEW</scope>
</reference>
<reference key="8">
    <citation type="journal article" date="2011" name="J. Ind. Microbiol. Biotechnol.">
        <title>YqhC regulates transcription of the adjacent Escherichia coli genes yqhD and dkgA that are involved in furfural tolerance.</title>
        <authorList>
            <person name="Turner P.C."/>
            <person name="Miller E.N."/>
            <person name="Jarboe L.R."/>
            <person name="Baggett C.L."/>
            <person name="Shanmugam K.T."/>
            <person name="Ingram L.O."/>
        </authorList>
    </citation>
    <scope>INDUCTION</scope>
    <source>
        <strain>KO11 / LY180</strain>
    </source>
</reference>
<reference key="9">
    <citation type="journal article" date="2021" name="Front. Microbiol.">
        <title>Tolerance to Glutaraldehyde in Escherichia coli Mediated by Overexpression of the Aldehyde Reductase YqhD by YqhC.</title>
        <authorList>
            <person name="Merchel Piovesan Pereira B."/>
            <person name="Adil Salim M."/>
            <person name="Rai N."/>
            <person name="Tagkopoulos I."/>
        </authorList>
    </citation>
    <scope>FUNCTION</scope>
    <scope>BIOPHYSICOCHEMICAL PROPERTIES</scope>
    <scope>DISRUPTION PHENOTYPE</scope>
</reference>
<reference key="10">
    <citation type="journal article" date="2021" name="Molecules">
        <title>Dynamic Preference for NADP/H Cofactor Binding/Release in E. coli YqhD Oxidoreductase.</title>
        <authorList>
            <person name="Verma R."/>
            <person name="Ellis J.M."/>
            <person name="Mitchell-Koch K.R."/>
        </authorList>
    </citation>
    <scope>DOMAIN</scope>
    <scope>MOLECULAR DYNAMICS SIMULATIONS</scope>
</reference>
<reference evidence="14" key="11">
    <citation type="journal article" date="2004" name="J. Mol. Biol.">
        <title>Crystal structure of E.coli alcohol dehydrogenase YqhD: evidence of a covalently modified NADP coenzyme.</title>
        <authorList>
            <person name="Sulzenbacher G."/>
            <person name="Alvarez K."/>
            <person name="Van Den Heuvel R.H."/>
            <person name="Versluis C."/>
            <person name="Spinelli S."/>
            <person name="Campanacci V."/>
            <person name="Valencia C."/>
            <person name="Cambillau C."/>
            <person name="Eklund H."/>
            <person name="Tegoni M."/>
        </authorList>
    </citation>
    <scope>X-RAY CRYSTALLOGRAPHY (2.0 ANGSTROMS) OF 2-387 IN COMPLEX WITH ZINC IONS AND A COVALENTLY MODIFIED NADP DERIVATIVE</scope>
    <scope>FUNCTION</scope>
    <scope>CATALYTIC ACTIVITY</scope>
    <scope>COFACTOR</scope>
    <scope>BIOPHYSICOCHEMICAL PROPERTIES</scope>
    <scope>SUBUNIT</scope>
</reference>
<reference evidence="15" key="12">
    <citation type="submission" date="2014-05" db="PDB data bank">
        <title>Open form of E. coli YqhD.</title>
        <authorList>
            <person name="LaMattina J.W."/>
            <person name="Kapoor S."/>
            <person name="Gouvea I."/>
            <person name="Slovic A."/>
            <person name="Lanzilotta W.N."/>
        </authorList>
    </citation>
    <scope>X-RAY CRYSTALLOGRAPHY (1.70 ANGSTROMS) IN COMPLEX WITH ZN(2+)</scope>
</reference>
<evidence type="ECO:0000269" key="1">
    <source>
    </source>
</evidence>
<evidence type="ECO:0000269" key="2">
    <source>
    </source>
</evidence>
<evidence type="ECO:0000269" key="3">
    <source>
    </source>
</evidence>
<evidence type="ECO:0000269" key="4">
    <source>
    </source>
</evidence>
<evidence type="ECO:0000269" key="5">
    <source>
    </source>
</evidence>
<evidence type="ECO:0000269" key="6">
    <source>
    </source>
</evidence>
<evidence type="ECO:0000269" key="7">
    <source>
    </source>
</evidence>
<evidence type="ECO:0000269" key="8">
    <source>
    </source>
</evidence>
<evidence type="ECO:0000269" key="9">
    <source ref="12"/>
</evidence>
<evidence type="ECO:0000303" key="10">
    <source>
    </source>
</evidence>
<evidence type="ECO:0000303" key="11">
    <source>
    </source>
</evidence>
<evidence type="ECO:0000305" key="12"/>
<evidence type="ECO:0000305" key="13">
    <source>
    </source>
</evidence>
<evidence type="ECO:0007744" key="14">
    <source>
        <dbReference type="PDB" id="1OJ7"/>
    </source>
</evidence>
<evidence type="ECO:0007744" key="15">
    <source>
        <dbReference type="PDB" id="4QGS"/>
    </source>
</evidence>
<evidence type="ECO:0007829" key="16">
    <source>
        <dbReference type="PDB" id="1OJ7"/>
    </source>
</evidence>
<evidence type="ECO:0007829" key="17">
    <source>
        <dbReference type="PDB" id="4QGS"/>
    </source>
</evidence>
<organism>
    <name type="scientific">Escherichia coli (strain K12)</name>
    <dbReference type="NCBI Taxonomy" id="83333"/>
    <lineage>
        <taxon>Bacteria</taxon>
        <taxon>Pseudomonadati</taxon>
        <taxon>Pseudomonadota</taxon>
        <taxon>Gammaproteobacteria</taxon>
        <taxon>Enterobacterales</taxon>
        <taxon>Enterobacteriaceae</taxon>
        <taxon>Escherichia</taxon>
    </lineage>
</organism>
<accession>Q46856</accession>
<accession>Q2M9I8</accession>
<comment type="function">
    <text evidence="2 3 4 5 8">Exhibits NADPH-dependent reductase activity for a broad range of short-chain aldehydes (PubMed:18211903, PubMed:19429550, PubMed:19609521, PubMed:20543070). Shows highest catalytic efficiency toward butanal, propanal and the highly toxic aldehydes acrolein and malondialdehyde (MDA), which are produced mainly during lipid peroxidation (PubMed:18211903, PubMed:20543070). Mediates resistance to reactive oxygen species (ROS) elicitors, such as paraquat and potassium tellurite, probably by protecting the cell against the toxic effects of reactive aldehydes derived from membrane lipid peroxidation (PubMed:18211903). Also acts, with lower efficiency, on acetaldehyde, glyceraldehyde, glycolaldehyde, methylglyoxal, glyoxal and hydroxyacetone (PubMed:18211903, PubMed:19609521, PubMed:20543070). Could be involved in glyoxal metabolism, by catalyzing the reduction of glyoxal to glycolaldehyde, and further to 1,2-ethandiol (PubMed:20543070). Catalyzes the reduction of isobutyraldehyde (2-methylpropanal) to isobutanol, and probably contributes to the production of isobutanol (PubMed:19609521). Can probably catalyze the reduction of glutaraldehyde, a widely used biocide, to 1,5-pentanediol, which is non-toxic (PubMed:34248896). Overexpression of YqhD protects the cells against glutaraldehyde toxicity (PubMed:34248896). Can catalyze in vitro the NADPH-dependent reduction of furfural, a natural product of lignocellulosic decomposition, to the less toxic product, furfuryl alcohol (PubMed:19429550). However, it is unlikely that furfural is a physiological substrate (PubMed:19429550).</text>
</comment>
<comment type="function">
    <text evidence="1 2">In contrast, Sulzenbacher et al. detected significant activities only in the presence of alcohol and NADP(+) (PubMed:15327949). They reported in vitro NADP(+)-dependent alcohol dehydrogenase (ADH) activity towards various alcohols, with a preference for alcohols longer than C(3), but the affinity for the substrates is poor, suggesting that these compounds are not the physiological substrates (PubMed:15327949). Perez et al. did not detect dehydrogenase activity with short and medium chain alcohols such as methanol, ethanol, propanol, butanol or isopropanol (PubMed:18211903).</text>
</comment>
<comment type="catalytic activity">
    <reaction evidence="1 2 3 4 5">
        <text>a primary alcohol + NADP(+) = an aldehyde + NADPH + H(+)</text>
        <dbReference type="Rhea" id="RHEA:15937"/>
        <dbReference type="ChEBI" id="CHEBI:15378"/>
        <dbReference type="ChEBI" id="CHEBI:15734"/>
        <dbReference type="ChEBI" id="CHEBI:17478"/>
        <dbReference type="ChEBI" id="CHEBI:57783"/>
        <dbReference type="ChEBI" id="CHEBI:58349"/>
        <dbReference type="EC" id="1.1.1.2"/>
    </reaction>
</comment>
<comment type="catalytic activity">
    <reaction evidence="1 2 5">
        <text>butan-1-ol + NADP(+) = butanal + NADPH + H(+)</text>
        <dbReference type="Rhea" id="RHEA:64708"/>
        <dbReference type="ChEBI" id="CHEBI:15378"/>
        <dbReference type="ChEBI" id="CHEBI:15743"/>
        <dbReference type="ChEBI" id="CHEBI:28885"/>
        <dbReference type="ChEBI" id="CHEBI:57783"/>
        <dbReference type="ChEBI" id="CHEBI:58349"/>
    </reaction>
</comment>
<comment type="catalytic activity">
    <reaction evidence="1 2">
        <text>1-propanol + NADP(+) = propanal + NADPH + H(+)</text>
        <dbReference type="Rhea" id="RHEA:64712"/>
        <dbReference type="ChEBI" id="CHEBI:15378"/>
        <dbReference type="ChEBI" id="CHEBI:17153"/>
        <dbReference type="ChEBI" id="CHEBI:28831"/>
        <dbReference type="ChEBI" id="CHEBI:57783"/>
        <dbReference type="ChEBI" id="CHEBI:58349"/>
    </reaction>
</comment>
<comment type="catalytic activity">
    <reaction evidence="2">
        <text>allyl alcohol + NADP(+) = acrolein + NADPH + H(+)</text>
        <dbReference type="Rhea" id="RHEA:12168"/>
        <dbReference type="ChEBI" id="CHEBI:15368"/>
        <dbReference type="ChEBI" id="CHEBI:15378"/>
        <dbReference type="ChEBI" id="CHEBI:16605"/>
        <dbReference type="ChEBI" id="CHEBI:57783"/>
        <dbReference type="ChEBI" id="CHEBI:58349"/>
    </reaction>
</comment>
<comment type="cofactor">
    <cofactor evidence="1">
        <name>Zn(2+)</name>
        <dbReference type="ChEBI" id="CHEBI:29105"/>
    </cofactor>
    <text evidence="1 9">Binds 1 zinc ion per subunit.</text>
</comment>
<comment type="biophysicochemical properties">
    <kinetics>
        <KM evidence="2">0.67 mM for butanal</KM>
        <KM evidence="5">0.4 mM for butanal</KM>
        <KM evidence="2">3.31 mM for propanal</KM>
        <KM evidence="2">4.81 mM for acrolein</KM>
        <KM evidence="2">1.78 mM for malondialdehyde</KM>
        <KM evidence="2">28.47 mM for acetaldehyde</KM>
        <KM evidence="4">27.6 mM for acetaldehyde</KM>
        <KM evidence="4">1.8 mM for isobutyraldehyde</KM>
        <KM evidence="5">11.53 mM for glyoxal</KM>
        <KM evidence="5">28.28 mM for glycolaldehyde</KM>
        <KM evidence="5">2.6 mM for methylglyoxal</KM>
        <KM evidence="5">1.36 mM for glyceraldehyde</KM>
        <KM evidence="5">76.9 mM for hydroxyacetone</KM>
        <KM evidence="8">0.55 mM for glutaraldehyde</KM>
        <KM evidence="3">9 mM for furfural</KM>
        <KM evidence="3">0.008 mM for NADPH</KM>
        <KM evidence="1">20 mM for 1-propanol</KM>
        <KM evidence="1">36 mM for 1-butanol</KM>
        <KM evidence="1">9 mM for 1-pentanol</KM>
        <KM evidence="1">24 mM for isoamyl alcohol</KM>
        <KM evidence="1">15 mM for 1-hexanol</KM>
        <KM evidence="1">26 mM for 1-octanol</KM>
        <KM evidence="1">6 mM for benzyl alcohol</KM>
        <text evidence="2 4 5">kcat is 59.5 sec(-1) with butanal as substrate (PubMed:18211903). kcat is 1983 min(-1) with butanal as substrate (PubMed:20543070). kcat is 45.06 sec(-1) with propanal as substrate (PubMed:18211903). kcat is 62.5 sec(-1) with acrolein as substrate (PubMed:18211903). kcat is 60.1 sec(-1) with malondialdehyde as substrate (PubMed:18211903). kcat is 53.5 sec(-1) with acetaldehyde as substrate (PubMed:18211903). kcat is 1.1 sec(-1) with acetaldehyde as substrate (PubMed:19609521). kcat is 1 sec(-1) with isobutyraldehyde as substrate (PubMed:19609521). kcat is 618 min(-1) with glyoxal as substrate (PubMed:20543070). kcat is 3258 min(-1) with glycolaldehyde as substrate (PubMed:20543070). kcat is 284 min(-1) with methylglyoxal as substrate (PubMed:20543070). kcat is 204 min(-1) with glyceraldehyde as substrate (PubMed:20543070). kcat is 144 min(-1) with hydroxyacetone as substrate (PubMed:20543070).</text>
    </kinetics>
</comment>
<comment type="subunit">
    <text evidence="1">Homodimer (PubMed:15327949). The crystals contain two dimers in the asymmetric unit (PubMed:15327949).</text>
</comment>
<comment type="induction">
    <text evidence="2 5 6">Expression is activated by the HTH-type transcriptional regulator YqhC (PubMed:20543070, PubMed:20676725). Induced in response to conditions that favor lipid peroxidation, such as exposure to H(2)O(2), K(2)TeO(3), paraquat, tert-butylhydroperoxide (t-BOOH) and low temperatures (PubMed:18211903).</text>
</comment>
<comment type="domain">
    <text evidence="7">Molecular dynamics simulations of the YqhD homodimer show that the oxidation state of the NADP/NADPH cofactor has a profound effect on enzyme structure and dynamics, which is consistent with differences in enzyme efficacy toward alcohols versus aldehydes (PubMed:33430436). The NADP-bound YqhD fluctuates between open and closed conformations, while it was observed that NADPH-bound YqhD had slower opening/closing dynamics of the cofactor-binding cleft (PubMed:33430436). The frequently sampled open conformation of the cofactor binding cleft with NADP leads to the more facile release of NADP while increased closed conformation sampling during NADPH binding enhances cofactor binding affinity and the aldehyde reductase activity of the enzyme (PubMed:33430436).</text>
</comment>
<comment type="disruption phenotype">
    <text evidence="2 4 5 8">The deletion mutant shows increased sensitivity to reactive oxygen-generating compounds such as paraquat, potassium tellurite, chromate and hydrogen peroxide (PubMed:18211903). The mutant shows increased level of lipid peroxidation products (PubMed:18211903). Deletion of the gene leads to accumulation of isobutyraldehyde and a strong decrease in isobutanol production, suggesting that YqhD contributes significantly to the isobutyraldehyde reductase activity in E.coli (PubMed:19609521). The mutant shows greater sensitivity to glyoxal but no difference in methylglyoxal sensitivity (PubMed:20543070). The knockout strain also shows higher susceptibility to glutaraldehyde (PubMed:34248896).</text>
</comment>
<comment type="biotechnology">
    <text evidence="13">Is able to produce valuable biorenewable fuels and chemicals from a broad range of starting materials.</text>
</comment>
<comment type="similarity">
    <text evidence="12">Belongs to the iron-containing alcohol dehydrogenase family.</text>
</comment>
<gene>
    <name type="primary">yqhD</name>
    <name type="ordered locus">b3011</name>
    <name type="ordered locus">JW2978</name>
</gene>
<keyword id="KW-0002">3D-structure</keyword>
<keyword id="KW-0479">Metal-binding</keyword>
<keyword id="KW-0521">NADP</keyword>
<keyword id="KW-0560">Oxidoreductase</keyword>
<keyword id="KW-1185">Reference proteome</keyword>
<keyword id="KW-0862">Zinc</keyword>
<sequence>MNNFNLHTPTRILFGKGAIAGLREQIPHDARVLITYGGGSVKKTGVLDQVLDALKGMDVLEFGGIEPNPAYETLMNAVKLVREQKVTFLLAVGGGSVLDGTKFIAAAANYPENIDPWHILQTGGKEIKSAIPMGCVLTLPATGSESNAGAVISRKTTGDKQAFHSAHVQPVFAVLDPVYTYTLPPRQVANGVVDAFVHTVEQYVTKPVDAKIQDRFAEGILLTLIEDGPKALKEPENYDVRANVMWAATQALNGLIGAGVPQDWATHMLGHELTAMHGLDHAQTLAIVLPALWNEKRDTKRAKLLQYAERVWNITEGSDDERIDAAIAATRNFFEQLGVPTHLSDYGLDGSSIPALLKKLEEHGMTQLGENHDITLDVSRRIYEAAR</sequence>
<protein>
    <recommendedName>
        <fullName evidence="12">NADPH-dependent aldehyde reductase YqhD</fullName>
        <ecNumber evidence="1 2 3 4 5">1.1.1.2</ecNumber>
    </recommendedName>
    <alternativeName>
        <fullName evidence="12">Alcohol dehydrogenase YqhD</fullName>
    </alternativeName>
    <alternativeName>
        <fullName evidence="11">Alcohol/aldehyde oxidoreductase YqhD</fullName>
    </alternativeName>
    <alternativeName>
        <fullName evidence="10">Broad-range ADH</fullName>
    </alternativeName>
</protein>
<name>YQHD_ECOLI</name>
<dbReference type="EC" id="1.1.1.2" evidence="1 2 3 4 5"/>
<dbReference type="EMBL" id="U28377">
    <property type="protein sequence ID" value="AAA69178.1"/>
    <property type="molecule type" value="Genomic_DNA"/>
</dbReference>
<dbReference type="EMBL" id="U00096">
    <property type="protein sequence ID" value="AAC76047.1"/>
    <property type="molecule type" value="Genomic_DNA"/>
</dbReference>
<dbReference type="EMBL" id="AP009048">
    <property type="protein sequence ID" value="BAE77068.1"/>
    <property type="molecule type" value="Genomic_DNA"/>
</dbReference>
<dbReference type="PIR" id="A65088">
    <property type="entry name" value="A65088"/>
</dbReference>
<dbReference type="RefSeq" id="NP_417484.1">
    <property type="nucleotide sequence ID" value="NC_000913.3"/>
</dbReference>
<dbReference type="RefSeq" id="WP_001058802.1">
    <property type="nucleotide sequence ID" value="NZ_SSZK01000023.1"/>
</dbReference>
<dbReference type="PDB" id="1OJ7">
    <property type="method" value="X-ray"/>
    <property type="resolution" value="2.00 A"/>
    <property type="chains" value="A/B/C/D=2-387"/>
</dbReference>
<dbReference type="PDB" id="4QGS">
    <property type="method" value="X-ray"/>
    <property type="resolution" value="1.70 A"/>
    <property type="chains" value="A=1-387"/>
</dbReference>
<dbReference type="PDBsum" id="1OJ7"/>
<dbReference type="PDBsum" id="4QGS"/>
<dbReference type="SMR" id="Q46856"/>
<dbReference type="BioGRID" id="4262380">
    <property type="interactions" value="43"/>
</dbReference>
<dbReference type="DIP" id="DIP-12870N"/>
<dbReference type="FunCoup" id="Q46856">
    <property type="interactions" value="134"/>
</dbReference>
<dbReference type="IntAct" id="Q46856">
    <property type="interactions" value="3"/>
</dbReference>
<dbReference type="STRING" id="511145.b3011"/>
<dbReference type="DrugBank" id="DB02319">
    <property type="generic name" value="5,6-dihydroxy-NADP"/>
</dbReference>
<dbReference type="jPOST" id="Q46856"/>
<dbReference type="PaxDb" id="511145-b3011"/>
<dbReference type="EnsemblBacteria" id="AAC76047">
    <property type="protein sequence ID" value="AAC76047"/>
    <property type="gene ID" value="b3011"/>
</dbReference>
<dbReference type="GeneID" id="75203591"/>
<dbReference type="GeneID" id="947493"/>
<dbReference type="KEGG" id="ecj:JW2978"/>
<dbReference type="KEGG" id="eco:b3011"/>
<dbReference type="KEGG" id="ecoc:C3026_16460"/>
<dbReference type="PATRIC" id="fig|1411691.4.peg.3718"/>
<dbReference type="EchoBASE" id="EB2834"/>
<dbReference type="eggNOG" id="COG1979">
    <property type="taxonomic scope" value="Bacteria"/>
</dbReference>
<dbReference type="HOGENOM" id="CLU_007207_0_4_6"/>
<dbReference type="InParanoid" id="Q46856"/>
<dbReference type="OMA" id="HVLEQYM"/>
<dbReference type="OrthoDB" id="9815791at2"/>
<dbReference type="PhylomeDB" id="Q46856"/>
<dbReference type="BioCyc" id="EcoCyc:G7564-MONOMER"/>
<dbReference type="BioCyc" id="MetaCyc:G7564-MONOMER"/>
<dbReference type="BRENDA" id="1.1.1.2">
    <property type="organism ID" value="2026"/>
</dbReference>
<dbReference type="SABIO-RK" id="Q46856"/>
<dbReference type="EvolutionaryTrace" id="Q46856"/>
<dbReference type="PRO" id="PR:Q46856"/>
<dbReference type="Proteomes" id="UP000000625">
    <property type="component" value="Chromosome"/>
</dbReference>
<dbReference type="GO" id="GO:0005829">
    <property type="term" value="C:cytosol"/>
    <property type="evidence" value="ECO:0000314"/>
    <property type="project" value="EcoCyc"/>
</dbReference>
<dbReference type="GO" id="GO:0008106">
    <property type="term" value="F:alcohol dehydrogenase (NADP+) activity"/>
    <property type="evidence" value="ECO:0000314"/>
    <property type="project" value="EcoCyc"/>
</dbReference>
<dbReference type="GO" id="GO:0018455">
    <property type="term" value="F:alcohol dehydrogenase [NAD(P)+] activity"/>
    <property type="evidence" value="ECO:0000314"/>
    <property type="project" value="EcoliWiki"/>
</dbReference>
<dbReference type="GO" id="GO:1990362">
    <property type="term" value="F:butanol dehydrogenase (NAD+) activity"/>
    <property type="evidence" value="ECO:0007669"/>
    <property type="project" value="InterPro"/>
</dbReference>
<dbReference type="GO" id="GO:0042802">
    <property type="term" value="F:identical protein binding"/>
    <property type="evidence" value="ECO:0000314"/>
    <property type="project" value="EcoCyc"/>
</dbReference>
<dbReference type="GO" id="GO:1990002">
    <property type="term" value="F:methylglyoxal reductase (NADPH) (acetol producing) activity"/>
    <property type="evidence" value="ECO:0000314"/>
    <property type="project" value="EcoCyc"/>
</dbReference>
<dbReference type="GO" id="GO:0008270">
    <property type="term" value="F:zinc ion binding"/>
    <property type="evidence" value="ECO:0000314"/>
    <property type="project" value="EcoCyc"/>
</dbReference>
<dbReference type="GO" id="GO:0000302">
    <property type="term" value="P:response to reactive oxygen species"/>
    <property type="evidence" value="ECO:0000315"/>
    <property type="project" value="EcoCyc"/>
</dbReference>
<dbReference type="CDD" id="cd08187">
    <property type="entry name" value="BDH"/>
    <property type="match status" value="1"/>
</dbReference>
<dbReference type="FunFam" id="1.20.1090.10:FF:000005">
    <property type="entry name" value="Alcohol dehydrogenase YqhD"/>
    <property type="match status" value="1"/>
</dbReference>
<dbReference type="FunFam" id="3.40.50.1970:FF:000008">
    <property type="entry name" value="Alcohol dehydrogenase YqhD"/>
    <property type="match status" value="1"/>
</dbReference>
<dbReference type="Gene3D" id="3.40.50.1970">
    <property type="match status" value="1"/>
</dbReference>
<dbReference type="Gene3D" id="1.20.1090.10">
    <property type="entry name" value="Dehydroquinate synthase-like - alpha domain"/>
    <property type="match status" value="1"/>
</dbReference>
<dbReference type="InterPro" id="IPR001670">
    <property type="entry name" value="ADH_Fe/GldA"/>
</dbReference>
<dbReference type="InterPro" id="IPR056798">
    <property type="entry name" value="ADH_Fe_C"/>
</dbReference>
<dbReference type="InterPro" id="IPR018211">
    <property type="entry name" value="ADH_Fe_CS"/>
</dbReference>
<dbReference type="InterPro" id="IPR044731">
    <property type="entry name" value="BDH-like"/>
</dbReference>
<dbReference type="NCBIfam" id="NF011717">
    <property type="entry name" value="PRK15138.1"/>
    <property type="match status" value="1"/>
</dbReference>
<dbReference type="PANTHER" id="PTHR43633">
    <property type="entry name" value="ALCOHOL DEHYDROGENASE YQHD"/>
    <property type="match status" value="1"/>
</dbReference>
<dbReference type="PANTHER" id="PTHR43633:SF1">
    <property type="entry name" value="ALCOHOL DEHYDROGENASE YQHD"/>
    <property type="match status" value="1"/>
</dbReference>
<dbReference type="Pfam" id="PF25137">
    <property type="entry name" value="ADH_Fe_C"/>
    <property type="match status" value="1"/>
</dbReference>
<dbReference type="Pfam" id="PF00465">
    <property type="entry name" value="Fe-ADH"/>
    <property type="match status" value="1"/>
</dbReference>
<dbReference type="SUPFAM" id="SSF56796">
    <property type="entry name" value="Dehydroquinate synthase-like"/>
    <property type="match status" value="1"/>
</dbReference>
<dbReference type="PROSITE" id="PS00913">
    <property type="entry name" value="ADH_IRON_1"/>
    <property type="match status" value="1"/>
</dbReference>
<dbReference type="PROSITE" id="PS00060">
    <property type="entry name" value="ADH_IRON_2"/>
    <property type="match status" value="1"/>
</dbReference>
<feature type="chain" id="PRO_0000087832" description="NADPH-dependent aldehyde reductase YqhD">
    <location>
        <begin position="1"/>
        <end position="387"/>
    </location>
</feature>
<feature type="binding site" evidence="1 14">
    <location>
        <position position="38"/>
    </location>
    <ligand>
        <name>NADP(+)</name>
        <dbReference type="ChEBI" id="CHEBI:58349"/>
    </ligand>
</feature>
<feature type="binding site" evidence="1 14">
    <location>
        <position position="40"/>
    </location>
    <ligand>
        <name>NADP(+)</name>
        <dbReference type="ChEBI" id="CHEBI:58349"/>
    </ligand>
</feature>
<feature type="binding site" evidence="1 14">
    <location>
        <position position="68"/>
    </location>
    <ligand>
        <name>NADP(+)</name>
        <dbReference type="ChEBI" id="CHEBI:58349"/>
    </ligand>
</feature>
<feature type="binding site" evidence="1 14">
    <location>
        <position position="95"/>
    </location>
    <ligand>
        <name>NADP(+)</name>
        <dbReference type="ChEBI" id="CHEBI:58349"/>
    </ligand>
</feature>
<feature type="binding site" evidence="1 14">
    <location>
        <position position="96"/>
    </location>
    <ligand>
        <name>NADP(+)</name>
        <dbReference type="ChEBI" id="CHEBI:58349"/>
    </ligand>
</feature>
<feature type="binding site" evidence="1 14">
    <location>
        <position position="99"/>
    </location>
    <ligand>
        <name>NADP(+)</name>
        <dbReference type="ChEBI" id="CHEBI:58349"/>
    </ligand>
</feature>
<feature type="binding site" evidence="1 14">
    <location>
        <position position="138"/>
    </location>
    <ligand>
        <name>NADP(+)</name>
        <dbReference type="ChEBI" id="CHEBI:58349"/>
    </ligand>
</feature>
<feature type="binding site" evidence="1 14">
    <location>
        <position position="147"/>
    </location>
    <ligand>
        <name>NADP(+)</name>
        <dbReference type="ChEBI" id="CHEBI:58349"/>
    </ligand>
</feature>
<feature type="binding site" evidence="1 14">
    <location>
        <position position="149"/>
    </location>
    <ligand>
        <name>NADP(+)</name>
        <dbReference type="ChEBI" id="CHEBI:58349"/>
    </ligand>
</feature>
<feature type="binding site" evidence="1 14">
    <location>
        <position position="160"/>
    </location>
    <ligand>
        <name>NADP(+)</name>
        <dbReference type="ChEBI" id="CHEBI:58349"/>
    </ligand>
</feature>
<feature type="binding site" evidence="1 14">
    <location>
        <position position="179"/>
    </location>
    <ligand>
        <name>NADP(+)</name>
        <dbReference type="ChEBI" id="CHEBI:58349"/>
    </ligand>
</feature>
<feature type="binding site" evidence="1 14">
    <location>
        <position position="182"/>
    </location>
    <ligand>
        <name>NADP(+)</name>
        <dbReference type="ChEBI" id="CHEBI:58349"/>
    </ligand>
</feature>
<feature type="binding site" evidence="1 9 14 15">
    <location>
        <position position="194"/>
    </location>
    <ligand>
        <name>Zn(2+)</name>
        <dbReference type="ChEBI" id="CHEBI:29105"/>
        <note>catalytic</note>
    </ligand>
</feature>
<feature type="binding site" evidence="1 9 14 15">
    <location>
        <position position="198"/>
    </location>
    <ligand>
        <name>Zn(2+)</name>
        <dbReference type="ChEBI" id="CHEBI:29105"/>
        <note>catalytic</note>
    </ligand>
</feature>
<feature type="binding site" evidence="1 9 14 15">
    <location>
        <position position="267"/>
    </location>
    <ligand>
        <name>Zn(2+)</name>
        <dbReference type="ChEBI" id="CHEBI:29105"/>
        <note>catalytic</note>
    </ligand>
</feature>
<feature type="binding site" evidence="1 9 14 15">
    <location>
        <position position="281"/>
    </location>
    <ligand>
        <name>Zn(2+)</name>
        <dbReference type="ChEBI" id="CHEBI:29105"/>
        <note>catalytic</note>
    </ligand>
</feature>
<feature type="strand" evidence="17">
    <location>
        <begin position="11"/>
        <end position="15"/>
    </location>
</feature>
<feature type="helix" evidence="17">
    <location>
        <begin position="18"/>
        <end position="21"/>
    </location>
</feature>
<feature type="helix" evidence="17">
    <location>
        <begin position="23"/>
        <end position="25"/>
    </location>
</feature>
<feature type="strand" evidence="17">
    <location>
        <begin position="31"/>
        <end position="35"/>
    </location>
</feature>
<feature type="strand" evidence="17">
    <location>
        <begin position="37"/>
        <end position="39"/>
    </location>
</feature>
<feature type="helix" evidence="17">
    <location>
        <begin position="40"/>
        <end position="44"/>
    </location>
</feature>
<feature type="helix" evidence="17">
    <location>
        <begin position="46"/>
        <end position="53"/>
    </location>
</feature>
<feature type="turn" evidence="17">
    <location>
        <begin position="54"/>
        <end position="56"/>
    </location>
</feature>
<feature type="strand" evidence="17">
    <location>
        <begin position="57"/>
        <end position="62"/>
    </location>
</feature>
<feature type="helix" evidence="17">
    <location>
        <begin position="71"/>
        <end position="84"/>
    </location>
</feature>
<feature type="strand" evidence="17">
    <location>
        <begin position="88"/>
        <end position="94"/>
    </location>
</feature>
<feature type="helix" evidence="17">
    <location>
        <begin position="95"/>
        <end position="108"/>
    </location>
</feature>
<feature type="helix" evidence="17">
    <location>
        <begin position="118"/>
        <end position="121"/>
    </location>
</feature>
<feature type="turn" evidence="17">
    <location>
        <begin position="122"/>
        <end position="126"/>
    </location>
</feature>
<feature type="strand" evidence="17">
    <location>
        <begin position="133"/>
        <end position="139"/>
    </location>
</feature>
<feature type="helix" evidence="16">
    <location>
        <begin position="144"/>
        <end position="146"/>
    </location>
</feature>
<feature type="strand" evidence="17">
    <location>
        <begin position="150"/>
        <end position="153"/>
    </location>
</feature>
<feature type="turn" evidence="16">
    <location>
        <begin position="155"/>
        <end position="158"/>
    </location>
</feature>
<feature type="strand" evidence="17">
    <location>
        <begin position="161"/>
        <end position="163"/>
    </location>
</feature>
<feature type="turn" evidence="17">
    <location>
        <begin position="166"/>
        <end position="168"/>
    </location>
</feature>
<feature type="strand" evidence="17">
    <location>
        <begin position="171"/>
        <end position="175"/>
    </location>
</feature>
<feature type="helix" evidence="17">
    <location>
        <begin position="177"/>
        <end position="180"/>
    </location>
</feature>
<feature type="helix" evidence="17">
    <location>
        <begin position="185"/>
        <end position="200"/>
    </location>
</feature>
<feature type="turn" evidence="17">
    <location>
        <begin position="201"/>
        <end position="203"/>
    </location>
</feature>
<feature type="strand" evidence="16">
    <location>
        <begin position="204"/>
        <end position="206"/>
    </location>
</feature>
<feature type="helix" evidence="17">
    <location>
        <begin position="211"/>
        <end position="233"/>
    </location>
</feature>
<feature type="helix" evidence="17">
    <location>
        <begin position="238"/>
        <end position="251"/>
    </location>
</feature>
<feature type="strand" evidence="16">
    <location>
        <begin position="252"/>
        <end position="254"/>
    </location>
</feature>
<feature type="turn" evidence="17">
    <location>
        <begin position="255"/>
        <end position="259"/>
    </location>
</feature>
<feature type="helix" evidence="17">
    <location>
        <begin position="265"/>
        <end position="277"/>
    </location>
</feature>
<feature type="helix" evidence="17">
    <location>
        <begin position="281"/>
        <end position="295"/>
    </location>
</feature>
<feature type="turn" evidence="17">
    <location>
        <begin position="296"/>
        <end position="300"/>
    </location>
</feature>
<feature type="helix" evidence="17">
    <location>
        <begin position="301"/>
        <end position="312"/>
    </location>
</feature>
<feature type="helix" evidence="17">
    <location>
        <begin position="319"/>
        <end position="336"/>
    </location>
</feature>
<feature type="helix" evidence="17">
    <location>
        <begin position="343"/>
        <end position="346"/>
    </location>
</feature>
<feature type="helix" evidence="17">
    <location>
        <begin position="353"/>
        <end position="362"/>
    </location>
</feature>
<feature type="strand" evidence="17">
    <location>
        <begin position="366"/>
        <end position="368"/>
    </location>
</feature>
<feature type="turn" evidence="17">
    <location>
        <begin position="369"/>
        <end position="372"/>
    </location>
</feature>
<feature type="helix" evidence="17">
    <location>
        <begin position="376"/>
        <end position="385"/>
    </location>
</feature>